<protein>
    <recommendedName>
        <fullName evidence="2">Large ribosomal subunit protein uL2y</fullName>
    </recommendedName>
    <alternativeName>
        <fullName>60S ribosomal protein L8-2</fullName>
    </alternativeName>
</protein>
<reference key="1">
    <citation type="journal article" date="2000" name="Nature">
        <title>Sequence and analysis of chromosome 3 of the plant Arabidopsis thaliana.</title>
        <authorList>
            <person name="Salanoubat M."/>
            <person name="Lemcke K."/>
            <person name="Rieger M."/>
            <person name="Ansorge W."/>
            <person name="Unseld M."/>
            <person name="Fartmann B."/>
            <person name="Valle G."/>
            <person name="Bloecker H."/>
            <person name="Perez-Alonso M."/>
            <person name="Obermaier B."/>
            <person name="Delseny M."/>
            <person name="Boutry M."/>
            <person name="Grivell L.A."/>
            <person name="Mache R."/>
            <person name="Puigdomenech P."/>
            <person name="De Simone V."/>
            <person name="Choisne N."/>
            <person name="Artiguenave F."/>
            <person name="Robert C."/>
            <person name="Brottier P."/>
            <person name="Wincker P."/>
            <person name="Cattolico L."/>
            <person name="Weissenbach J."/>
            <person name="Saurin W."/>
            <person name="Quetier F."/>
            <person name="Schaefer M."/>
            <person name="Mueller-Auer S."/>
            <person name="Gabel C."/>
            <person name="Fuchs M."/>
            <person name="Benes V."/>
            <person name="Wurmbach E."/>
            <person name="Drzonek H."/>
            <person name="Erfle H."/>
            <person name="Jordan N."/>
            <person name="Bangert S."/>
            <person name="Wiedelmann R."/>
            <person name="Kranz H."/>
            <person name="Voss H."/>
            <person name="Holland R."/>
            <person name="Brandt P."/>
            <person name="Nyakatura G."/>
            <person name="Vezzi A."/>
            <person name="D'Angelo M."/>
            <person name="Pallavicini A."/>
            <person name="Toppo S."/>
            <person name="Simionati B."/>
            <person name="Conrad A."/>
            <person name="Hornischer K."/>
            <person name="Kauer G."/>
            <person name="Loehnert T.-H."/>
            <person name="Nordsiek G."/>
            <person name="Reichelt J."/>
            <person name="Scharfe M."/>
            <person name="Schoen O."/>
            <person name="Bargues M."/>
            <person name="Terol J."/>
            <person name="Climent J."/>
            <person name="Navarro P."/>
            <person name="Collado C."/>
            <person name="Perez-Perez A."/>
            <person name="Ottenwaelder B."/>
            <person name="Duchemin D."/>
            <person name="Cooke R."/>
            <person name="Laudie M."/>
            <person name="Berger-Llauro C."/>
            <person name="Purnelle B."/>
            <person name="Masuy D."/>
            <person name="de Haan M."/>
            <person name="Maarse A.C."/>
            <person name="Alcaraz J.-P."/>
            <person name="Cottet A."/>
            <person name="Casacuberta E."/>
            <person name="Monfort A."/>
            <person name="Argiriou A."/>
            <person name="Flores M."/>
            <person name="Liguori R."/>
            <person name="Vitale D."/>
            <person name="Mannhaupt G."/>
            <person name="Haase D."/>
            <person name="Schoof H."/>
            <person name="Rudd S."/>
            <person name="Zaccaria P."/>
            <person name="Mewes H.-W."/>
            <person name="Mayer K.F.X."/>
            <person name="Kaul S."/>
            <person name="Town C.D."/>
            <person name="Koo H.L."/>
            <person name="Tallon L.J."/>
            <person name="Jenkins J."/>
            <person name="Rooney T."/>
            <person name="Rizzo M."/>
            <person name="Walts A."/>
            <person name="Utterback T."/>
            <person name="Fujii C.Y."/>
            <person name="Shea T.P."/>
            <person name="Creasy T.H."/>
            <person name="Haas B."/>
            <person name="Maiti R."/>
            <person name="Wu D."/>
            <person name="Peterson J."/>
            <person name="Van Aken S."/>
            <person name="Pai G."/>
            <person name="Militscher J."/>
            <person name="Sellers P."/>
            <person name="Gill J.E."/>
            <person name="Feldblyum T.V."/>
            <person name="Preuss D."/>
            <person name="Lin X."/>
            <person name="Nierman W.C."/>
            <person name="Salzberg S.L."/>
            <person name="White O."/>
            <person name="Venter J.C."/>
            <person name="Fraser C.M."/>
            <person name="Kaneko T."/>
            <person name="Nakamura Y."/>
            <person name="Sato S."/>
            <person name="Kato T."/>
            <person name="Asamizu E."/>
            <person name="Sasamoto S."/>
            <person name="Kimura T."/>
            <person name="Idesawa K."/>
            <person name="Kawashima K."/>
            <person name="Kishida Y."/>
            <person name="Kiyokawa C."/>
            <person name="Kohara M."/>
            <person name="Matsumoto M."/>
            <person name="Matsuno A."/>
            <person name="Muraki A."/>
            <person name="Nakayama S."/>
            <person name="Nakazaki N."/>
            <person name="Shinpo S."/>
            <person name="Takeuchi C."/>
            <person name="Wada T."/>
            <person name="Watanabe A."/>
            <person name="Yamada M."/>
            <person name="Yasuda M."/>
            <person name="Tabata S."/>
        </authorList>
    </citation>
    <scope>NUCLEOTIDE SEQUENCE [LARGE SCALE GENOMIC DNA]</scope>
    <source>
        <strain>cv. Columbia</strain>
    </source>
</reference>
<reference key="2">
    <citation type="journal article" date="2017" name="Plant J.">
        <title>Araport11: a complete reannotation of the Arabidopsis thaliana reference genome.</title>
        <authorList>
            <person name="Cheng C.Y."/>
            <person name="Krishnakumar V."/>
            <person name="Chan A.P."/>
            <person name="Thibaud-Nissen F."/>
            <person name="Schobel S."/>
            <person name="Town C.D."/>
        </authorList>
    </citation>
    <scope>GENOME REANNOTATION</scope>
    <source>
        <strain>cv. Columbia</strain>
    </source>
</reference>
<reference key="3">
    <citation type="submission" date="2005-05" db="EMBL/GenBank/DDBJ databases">
        <authorList>
            <person name="Underwood B.A."/>
            <person name="Xiao Y.-L."/>
            <person name="Moskal W.A. Jr."/>
            <person name="Monaghan E.L."/>
            <person name="Wang W."/>
            <person name="Redman J.C."/>
            <person name="Wu H.C."/>
            <person name="Utterback T."/>
            <person name="Town C.D."/>
        </authorList>
    </citation>
    <scope>NUCLEOTIDE SEQUENCE [LARGE SCALE MRNA]</scope>
    <source>
        <strain>cv. Columbia</strain>
    </source>
</reference>
<reference key="4">
    <citation type="journal article" date="2001" name="Plant Physiol.">
        <title>The organization of cytoplasmic ribosomal protein genes in the Arabidopsis genome.</title>
        <authorList>
            <person name="Barakat A."/>
            <person name="Szick-Miranda K."/>
            <person name="Chang I.-F."/>
            <person name="Guyot R."/>
            <person name="Blanc G."/>
            <person name="Cooke R."/>
            <person name="Delseny M."/>
            <person name="Bailey-Serres J."/>
        </authorList>
    </citation>
    <scope>GENE FAMILY ORGANIZATION</scope>
    <scope>NOMENCLATURE</scope>
</reference>
<reference key="5">
    <citation type="journal article" date="2023" name="Plant Cell">
        <title>An updated nomenclature for plant ribosomal protein genes.</title>
        <authorList>
            <person name="Scarpin M.R."/>
            <person name="Busche M."/>
            <person name="Martinez R.E."/>
            <person name="Harper L.C."/>
            <person name="Reiser L."/>
            <person name="Szakonyi D."/>
            <person name="Merchante C."/>
            <person name="Lan T."/>
            <person name="Xiong W."/>
            <person name="Mo B."/>
            <person name="Tang G."/>
            <person name="Chen X."/>
            <person name="Bailey-Serres J."/>
            <person name="Browning K.S."/>
            <person name="Brunkard J.O."/>
        </authorList>
    </citation>
    <scope>NOMENCLATURE</scope>
</reference>
<comment type="similarity">
    <text evidence="3">Belongs to the universal ribosomal protein uL2 family.</text>
</comment>
<dbReference type="EMBL" id="AL132980">
    <property type="protein sequence ID" value="CAB62641.1"/>
    <property type="molecule type" value="Genomic_DNA"/>
</dbReference>
<dbReference type="EMBL" id="CP002686">
    <property type="protein sequence ID" value="AEE78761.1"/>
    <property type="molecule type" value="Genomic_DNA"/>
</dbReference>
<dbReference type="EMBL" id="DQ056619">
    <property type="protein sequence ID" value="AAY78767.1"/>
    <property type="molecule type" value="mRNA"/>
</dbReference>
<dbReference type="PIR" id="T45750">
    <property type="entry name" value="T45750"/>
</dbReference>
<dbReference type="RefSeq" id="NP_190687.2">
    <property type="nucleotide sequence ID" value="NM_114978.3"/>
</dbReference>
<dbReference type="SMR" id="Q4PSL7"/>
<dbReference type="BioGRID" id="9600">
    <property type="interactions" value="160"/>
</dbReference>
<dbReference type="FunCoup" id="Q4PSL7">
    <property type="interactions" value="2830"/>
</dbReference>
<dbReference type="STRING" id="3702.Q4PSL7"/>
<dbReference type="iPTMnet" id="Q4PSL7"/>
<dbReference type="PaxDb" id="3702-AT3G51190.1"/>
<dbReference type="ProteomicsDB" id="228211"/>
<dbReference type="EnsemblPlants" id="AT3G51190.1">
    <property type="protein sequence ID" value="AT3G51190.1"/>
    <property type="gene ID" value="AT3G51190"/>
</dbReference>
<dbReference type="GeneID" id="824282"/>
<dbReference type="Gramene" id="AT3G51190.1">
    <property type="protein sequence ID" value="AT3G51190.1"/>
    <property type="gene ID" value="AT3G51190"/>
</dbReference>
<dbReference type="KEGG" id="ath:AT3G51190"/>
<dbReference type="Araport" id="AT3G51190"/>
<dbReference type="TAIR" id="AT3G51190"/>
<dbReference type="eggNOG" id="KOG2309">
    <property type="taxonomic scope" value="Eukaryota"/>
</dbReference>
<dbReference type="HOGENOM" id="CLU_036235_0_3_1"/>
<dbReference type="InParanoid" id="Q4PSL7"/>
<dbReference type="OMA" id="HPFRYGQ"/>
<dbReference type="OrthoDB" id="585154at2759"/>
<dbReference type="CD-CODE" id="4299E36E">
    <property type="entry name" value="Nucleolus"/>
</dbReference>
<dbReference type="PRO" id="PR:Q4PSL7"/>
<dbReference type="Proteomes" id="UP000006548">
    <property type="component" value="Chromosome 3"/>
</dbReference>
<dbReference type="ExpressionAtlas" id="Q4PSL7">
    <property type="expression patterns" value="baseline and differential"/>
</dbReference>
<dbReference type="GO" id="GO:0005829">
    <property type="term" value="C:cytosol"/>
    <property type="evidence" value="ECO:0007005"/>
    <property type="project" value="TAIR"/>
</dbReference>
<dbReference type="GO" id="GO:0022625">
    <property type="term" value="C:cytosolic large ribosomal subunit"/>
    <property type="evidence" value="ECO:0007005"/>
    <property type="project" value="TAIR"/>
</dbReference>
<dbReference type="GO" id="GO:0022626">
    <property type="term" value="C:cytosolic ribosome"/>
    <property type="evidence" value="ECO:0007005"/>
    <property type="project" value="TAIR"/>
</dbReference>
<dbReference type="GO" id="GO:0003723">
    <property type="term" value="F:RNA binding"/>
    <property type="evidence" value="ECO:0007669"/>
    <property type="project" value="InterPro"/>
</dbReference>
<dbReference type="GO" id="GO:0003735">
    <property type="term" value="F:structural constituent of ribosome"/>
    <property type="evidence" value="ECO:0000314"/>
    <property type="project" value="CAFA"/>
</dbReference>
<dbReference type="GO" id="GO:0006412">
    <property type="term" value="P:translation"/>
    <property type="evidence" value="ECO:0007669"/>
    <property type="project" value="InterPro"/>
</dbReference>
<dbReference type="FunFam" id="2.40.50.140:FF:000020">
    <property type="entry name" value="60S ribosomal protein L2"/>
    <property type="match status" value="1"/>
</dbReference>
<dbReference type="FunFam" id="4.10.950.10:FF:000002">
    <property type="entry name" value="60S ribosomal protein L2"/>
    <property type="match status" value="1"/>
</dbReference>
<dbReference type="FunFam" id="2.30.30.30:FF:000006">
    <property type="entry name" value="60S ribosomal protein L8"/>
    <property type="match status" value="1"/>
</dbReference>
<dbReference type="Gene3D" id="2.30.30.30">
    <property type="match status" value="1"/>
</dbReference>
<dbReference type="Gene3D" id="2.40.50.140">
    <property type="entry name" value="Nucleic acid-binding proteins"/>
    <property type="match status" value="1"/>
</dbReference>
<dbReference type="Gene3D" id="4.10.950.10">
    <property type="entry name" value="Ribosomal protein L2, domain 3"/>
    <property type="match status" value="1"/>
</dbReference>
<dbReference type="HAMAP" id="MF_01320_A">
    <property type="entry name" value="Ribosomal_uL2_A"/>
    <property type="match status" value="1"/>
</dbReference>
<dbReference type="InterPro" id="IPR012340">
    <property type="entry name" value="NA-bd_OB-fold"/>
</dbReference>
<dbReference type="InterPro" id="IPR014722">
    <property type="entry name" value="Rib_uL2_dom2"/>
</dbReference>
<dbReference type="InterPro" id="IPR002171">
    <property type="entry name" value="Ribosomal_uL2"/>
</dbReference>
<dbReference type="InterPro" id="IPR023672">
    <property type="entry name" value="Ribosomal_uL2_arc_euk"/>
</dbReference>
<dbReference type="InterPro" id="IPR022669">
    <property type="entry name" value="Ribosomal_uL2_C"/>
</dbReference>
<dbReference type="InterPro" id="IPR022671">
    <property type="entry name" value="Ribosomal_uL2_CS"/>
</dbReference>
<dbReference type="InterPro" id="IPR014726">
    <property type="entry name" value="Ribosomal_uL2_dom3"/>
</dbReference>
<dbReference type="InterPro" id="IPR022666">
    <property type="entry name" value="Ribosomal_uL2_RNA-bd_dom"/>
</dbReference>
<dbReference type="InterPro" id="IPR008991">
    <property type="entry name" value="Translation_prot_SH3-like_sf"/>
</dbReference>
<dbReference type="NCBIfam" id="NF007180">
    <property type="entry name" value="PRK09612.1"/>
    <property type="match status" value="1"/>
</dbReference>
<dbReference type="PANTHER" id="PTHR13691:SF40">
    <property type="entry name" value="LARGE RIBOSOMAL SUBUNIT PROTEIN UL2Y"/>
    <property type="match status" value="1"/>
</dbReference>
<dbReference type="PANTHER" id="PTHR13691">
    <property type="entry name" value="RIBOSOMAL PROTEIN L2"/>
    <property type="match status" value="1"/>
</dbReference>
<dbReference type="Pfam" id="PF00181">
    <property type="entry name" value="Ribosomal_L2"/>
    <property type="match status" value="1"/>
</dbReference>
<dbReference type="Pfam" id="PF03947">
    <property type="entry name" value="Ribosomal_L2_C"/>
    <property type="match status" value="1"/>
</dbReference>
<dbReference type="PIRSF" id="PIRSF002158">
    <property type="entry name" value="Ribosomal_L2"/>
    <property type="match status" value="1"/>
</dbReference>
<dbReference type="SMART" id="SM01383">
    <property type="entry name" value="Ribosomal_L2"/>
    <property type="match status" value="1"/>
</dbReference>
<dbReference type="SMART" id="SM01382">
    <property type="entry name" value="Ribosomal_L2_C"/>
    <property type="match status" value="1"/>
</dbReference>
<dbReference type="SUPFAM" id="SSF50249">
    <property type="entry name" value="Nucleic acid-binding proteins"/>
    <property type="match status" value="1"/>
</dbReference>
<dbReference type="SUPFAM" id="SSF50104">
    <property type="entry name" value="Translation proteins SH3-like domain"/>
    <property type="match status" value="1"/>
</dbReference>
<dbReference type="PROSITE" id="PS00467">
    <property type="entry name" value="RIBOSOMAL_L2"/>
    <property type="match status" value="1"/>
</dbReference>
<name>RL82_ARATH</name>
<gene>
    <name type="primary">RPL8B</name>
    <name type="ordered locus">At3g51190</name>
    <name type="ORF">F24M12.230</name>
</gene>
<accession>Q4PSL7</accession>
<accession>Q9SD27</accession>
<proteinExistence type="evidence at transcript level"/>
<organism>
    <name type="scientific">Arabidopsis thaliana</name>
    <name type="common">Mouse-ear cress</name>
    <dbReference type="NCBI Taxonomy" id="3702"/>
    <lineage>
        <taxon>Eukaryota</taxon>
        <taxon>Viridiplantae</taxon>
        <taxon>Streptophyta</taxon>
        <taxon>Embryophyta</taxon>
        <taxon>Tracheophyta</taxon>
        <taxon>Spermatophyta</taxon>
        <taxon>Magnoliopsida</taxon>
        <taxon>eudicotyledons</taxon>
        <taxon>Gunneridae</taxon>
        <taxon>Pentapetalae</taxon>
        <taxon>rosids</taxon>
        <taxon>malvids</taxon>
        <taxon>Brassicales</taxon>
        <taxon>Brassicaceae</taxon>
        <taxon>Camelineae</taxon>
        <taxon>Arabidopsis</taxon>
    </lineage>
</organism>
<sequence length="260" mass="27997">MGRVIRAQRKGAAGSVFKSHTHHRKGPAKFRSLDYGERNGYLKGLVTEIIHDPGRGAPLARVAFRHPFRYMKQKELFVAAEGMYTGQYLYCGKKANLMVGNVLPLGSIPEGAVICNVELHVGDRGALARASGDYAIVIAHNPESNTTRVKLPSGSKKILPSACRAMIGQVAGGGRTEKPLLKAGNAYHKYKAKRNCWPVVRGVAMNPVEHPHGGGNHQHIGHASTVRRDKSAGAKVGQIAARRTGRRRGAAATLAAKADY</sequence>
<keyword id="KW-1185">Reference proteome</keyword>
<keyword id="KW-0687">Ribonucleoprotein</keyword>
<keyword id="KW-0689">Ribosomal protein</keyword>
<feature type="chain" id="PRO_0000239927" description="Large ribosomal subunit protein uL2y">
    <location>
        <begin position="1"/>
        <end position="260"/>
    </location>
</feature>
<feature type="region of interest" description="Disordered" evidence="1">
    <location>
        <begin position="227"/>
        <end position="248"/>
    </location>
</feature>
<feature type="sequence conflict" description="In Ref. 1; CAB62641." evidence="3" ref="1">
    <original>L</original>
    <variation>F</variation>
    <location>
        <position position="180"/>
    </location>
</feature>
<evidence type="ECO:0000256" key="1">
    <source>
        <dbReference type="SAM" id="MobiDB-lite"/>
    </source>
</evidence>
<evidence type="ECO:0000303" key="2">
    <source>
    </source>
</evidence>
<evidence type="ECO:0000305" key="3"/>